<sequence>MENILNDINKRFISLPEEDVRGNKQILESVLRTFVEQMKTQDPLFKALFRRVFYGGSFYDGLKVGKPEEFDLDILLHIPIYAQPVLNESNVPGFVWLKLNNLDGWLRQPEGRVYKDFRKKFLADNDFLDTGKTLRWMESLVQKTLNTLPWVNNATCELTNEFGTFHINWWKGGPAMTLGISHSSGEKIMDVDLVACFVFSGDKWPINGYRSNPFPSTKPEFFIVPKKPQGPVNPQGRYWSLSFQEQERVLIDNKNRLKPAVKLIKKLKEKTHPNIASYYIKTVFLHIIEQKDQSFWNKSLREVFMTTLREYNEFIADQSIPYYWCRKNNLIGHLAPITLNNISNRIGYIIKDIENNPENIAKHLLTKEEYTKYIQGEDVMAEALPALPASQTSSCVII</sequence>
<gene>
    <name evidence="6" type="ORF">TcasGA2_TC003965</name>
</gene>
<reference key="1">
    <citation type="journal article" date="2008" name="Nature">
        <title>The genome of the model beetle and pest Tribolium castaneum.</title>
        <authorList>
            <consortium name="Tribolium Genome Sequencing Consortium"/>
            <person name="Richards S."/>
            <person name="Gibbs R.A."/>
            <person name="Weinstock G.M."/>
            <person name="Brown S.J."/>
            <person name="Denell R."/>
            <person name="Beeman R.W."/>
            <person name="Gibbs R."/>
            <person name="Beeman R.W."/>
            <person name="Brown S.J."/>
            <person name="Bucher G."/>
            <person name="Friedrich M."/>
            <person name="Grimmelikhuijzen C.J."/>
            <person name="Klingler M."/>
            <person name="Lorenzen M."/>
            <person name="Richards S."/>
            <person name="Roth S."/>
            <person name="Schroder R."/>
            <person name="Tautz D."/>
            <person name="Zdobnov E.M."/>
            <person name="Muzny D."/>
            <person name="Gibbs R.A."/>
            <person name="Weinstock G.M."/>
            <person name="Attaway T."/>
            <person name="Bell S."/>
            <person name="Buhay C.J."/>
            <person name="Chandrabose M.N."/>
            <person name="Chavez D."/>
            <person name="Clerk-Blankenburg K.P."/>
            <person name="Cree A."/>
            <person name="Dao M."/>
            <person name="Davis C."/>
            <person name="Chacko J."/>
            <person name="Dinh H."/>
            <person name="Dugan-Rocha S."/>
            <person name="Fowler G."/>
            <person name="Garner T.T."/>
            <person name="Garnes J."/>
            <person name="Gnirke A."/>
            <person name="Hawes A."/>
            <person name="Hernandez J."/>
            <person name="Hines S."/>
            <person name="Holder M."/>
            <person name="Hume J."/>
            <person name="Jhangiani S.N."/>
            <person name="Joshi V."/>
            <person name="Khan Z.M."/>
            <person name="Jackson L."/>
            <person name="Kovar C."/>
            <person name="Kowis A."/>
            <person name="Lee S."/>
            <person name="Lewis L.R."/>
            <person name="Margolis J."/>
            <person name="Morgan M."/>
            <person name="Nazareth L.V."/>
            <person name="Nguyen N."/>
            <person name="Okwuonu G."/>
            <person name="Parker D."/>
            <person name="Richards S."/>
            <person name="Ruiz S.J."/>
            <person name="Santibanez J."/>
            <person name="Savard J."/>
            <person name="Scherer S.E."/>
            <person name="Schneider B."/>
            <person name="Sodergren E."/>
            <person name="Tautz D."/>
            <person name="Vattahil S."/>
            <person name="Villasana D."/>
            <person name="White C.S."/>
            <person name="Wright R."/>
            <person name="Park Y."/>
            <person name="Beeman R.W."/>
            <person name="Lord J."/>
            <person name="Oppert B."/>
            <person name="Lorenzen M."/>
            <person name="Brown S."/>
            <person name="Wang L."/>
            <person name="Savard J."/>
            <person name="Tautz D."/>
            <person name="Richards S."/>
            <person name="Weinstock G."/>
            <person name="Gibbs R.A."/>
            <person name="Liu Y."/>
            <person name="Worley K."/>
            <person name="Weinstock G."/>
            <person name="Elsik C.G."/>
            <person name="Reese J.T."/>
            <person name="Elhaik E."/>
            <person name="Landan G."/>
            <person name="Graur D."/>
            <person name="Arensburger P."/>
            <person name="Atkinson P."/>
            <person name="Beeman R.W."/>
            <person name="Beidler J."/>
            <person name="Brown S.J."/>
            <person name="Demuth J.P."/>
            <person name="Drury D.W."/>
            <person name="Du Y.Z."/>
            <person name="Fujiwara H."/>
            <person name="Lorenzen M."/>
            <person name="Maselli V."/>
            <person name="Osanai M."/>
            <person name="Park Y."/>
            <person name="Robertson H.M."/>
            <person name="Tu Z."/>
            <person name="Wang J.J."/>
            <person name="Wang S."/>
            <person name="Richards S."/>
            <person name="Song H."/>
            <person name="Zhang L."/>
            <person name="Sodergren E."/>
            <person name="Werner D."/>
            <person name="Stanke M."/>
            <person name="Morgenstern B."/>
            <person name="Solovyev V."/>
            <person name="Kosarev P."/>
            <person name="Brown G."/>
            <person name="Chen H.C."/>
            <person name="Ermolaeva O."/>
            <person name="Hlavina W."/>
            <person name="Kapustin Y."/>
            <person name="Kiryutin B."/>
            <person name="Kitts P."/>
            <person name="Maglott D."/>
            <person name="Pruitt K."/>
            <person name="Sapojnikov V."/>
            <person name="Souvorov A."/>
            <person name="Mackey A.J."/>
            <person name="Waterhouse R.M."/>
            <person name="Wyder S."/>
            <person name="Zdobnov E.M."/>
            <person name="Zdobnov E.M."/>
            <person name="Wyder S."/>
            <person name="Kriventseva E.V."/>
            <person name="Kadowaki T."/>
            <person name="Bork P."/>
            <person name="Aranda M."/>
            <person name="Bao R."/>
            <person name="Beermann A."/>
            <person name="Berns N."/>
            <person name="Bolognesi R."/>
            <person name="Bonneton F."/>
            <person name="Bopp D."/>
            <person name="Brown S.J."/>
            <person name="Bucher G."/>
            <person name="Butts T."/>
            <person name="Chaumot A."/>
            <person name="Denell R.E."/>
            <person name="Ferrier D.E."/>
            <person name="Friedrich M."/>
            <person name="Gordon C.M."/>
            <person name="Jindra M."/>
            <person name="Klingler M."/>
            <person name="Lan Q."/>
            <person name="Lattorff H.M."/>
            <person name="Laudet V."/>
            <person name="von Levetsow C."/>
            <person name="Liu Z."/>
            <person name="Lutz R."/>
            <person name="Lynch J.A."/>
            <person name="da Fonseca R.N."/>
            <person name="Posnien N."/>
            <person name="Reuter R."/>
            <person name="Roth S."/>
            <person name="Savard J."/>
            <person name="Schinko J.B."/>
            <person name="Schmitt C."/>
            <person name="Schoppmeier M."/>
            <person name="Schroder R."/>
            <person name="Shippy T.D."/>
            <person name="Simonnet F."/>
            <person name="Marques-Souza H."/>
            <person name="Tautz D."/>
            <person name="Tomoyasu Y."/>
            <person name="Trauner J."/>
            <person name="Van der Zee M."/>
            <person name="Vervoort M."/>
            <person name="Wittkopp N."/>
            <person name="Wimmer E.A."/>
            <person name="Yang X."/>
            <person name="Jones A.K."/>
            <person name="Sattelle D.B."/>
            <person name="Ebert P.R."/>
            <person name="Nelson D."/>
            <person name="Scott J.G."/>
            <person name="Beeman R.W."/>
            <person name="Muthukrishnan S."/>
            <person name="Kramer K.J."/>
            <person name="Arakane Y."/>
            <person name="Beeman R.W."/>
            <person name="Zhu Q."/>
            <person name="Hogenkamp D."/>
            <person name="Dixit R."/>
            <person name="Oppert B."/>
            <person name="Jiang H."/>
            <person name="Zou Z."/>
            <person name="Marshall J."/>
            <person name="Elpidina E."/>
            <person name="Vinokurov K."/>
            <person name="Oppert C."/>
            <person name="Zou Z."/>
            <person name="Evans J."/>
            <person name="Lu Z."/>
            <person name="Zhao P."/>
            <person name="Sumathipala N."/>
            <person name="Altincicek B."/>
            <person name="Vilcinskas A."/>
            <person name="Williams M."/>
            <person name="Hultmark D."/>
            <person name="Hetru C."/>
            <person name="Jiang H."/>
            <person name="Grimmelikhuijzen C.J."/>
            <person name="Hauser F."/>
            <person name="Cazzamali G."/>
            <person name="Williamson M."/>
            <person name="Park Y."/>
            <person name="Li B."/>
            <person name="Tanaka Y."/>
            <person name="Predel R."/>
            <person name="Neupert S."/>
            <person name="Schachtner J."/>
            <person name="Verleyen P."/>
            <person name="Raible F."/>
            <person name="Bork P."/>
            <person name="Friedrich M."/>
            <person name="Walden K.K."/>
            <person name="Robertson H.M."/>
            <person name="Angeli S."/>
            <person name="Foret S."/>
            <person name="Bucher G."/>
            <person name="Schuetz S."/>
            <person name="Maleszka R."/>
            <person name="Wimmer E.A."/>
            <person name="Beeman R.W."/>
            <person name="Lorenzen M."/>
            <person name="Tomoyasu Y."/>
            <person name="Miller S.C."/>
            <person name="Grossmann D."/>
            <person name="Bucher G."/>
        </authorList>
    </citation>
    <scope>NUCLEOTIDE SEQUENCE [LARGE SCALE GENOMIC DNA]</scope>
    <source>
        <strain>Georgia GA2</strain>
    </source>
</reference>
<reference key="2">
    <citation type="journal article" date="2010" name="Nucleic Acids Res.">
        <title>BeetleBase in 2010: revisions to provide comprehensive genomic information for Tribolium castaneum.</title>
        <authorList>
            <person name="Kim H.S."/>
            <person name="Murphy T."/>
            <person name="Xia J."/>
            <person name="Caragea D."/>
            <person name="Park Y."/>
            <person name="Beeman R.W."/>
            <person name="Lorenzen M.D."/>
            <person name="Butcher S."/>
            <person name="Manak J.R."/>
            <person name="Brown S.J."/>
        </authorList>
    </citation>
    <scope>GENOME REANNOTATION</scope>
    <source>
        <strain>Georgia GA2</strain>
    </source>
</reference>
<reference key="3">
    <citation type="journal article" date="2021" name="Nature">
        <title>cGAS-like receptors sense RNA and control 3'2'-cGAMP signaling in Drosophila.</title>
        <authorList>
            <person name="Slavik K.M."/>
            <person name="Morehouse B.R."/>
            <person name="Ragucci A.E."/>
            <person name="Zhou W."/>
            <person name="Ai X."/>
            <person name="Chen Y."/>
            <person name="Li L."/>
            <person name="Wei Z."/>
            <person name="Baehre H."/>
            <person name="Koenig M."/>
            <person name="Seifert R."/>
            <person name="Lee A.S.Y."/>
            <person name="Cai H."/>
            <person name="Imler J.L."/>
            <person name="Kranzusch P.J."/>
        </authorList>
    </citation>
    <scope>X-RAY CRYSTALLOGRAPHY (1.58 ANGSTROMS) OF 1-398 IN COMPLEX WITH MANGANESE</scope>
    <scope>FUNCTION</scope>
    <scope>CATALYTIC ACTIVITY</scope>
    <scope>COFACTOR</scope>
    <scope>ACTIVITY REGULATION</scope>
</reference>
<accession>D6WI29</accession>
<keyword id="KW-0002">3D-structure</keyword>
<keyword id="KW-0051">Antiviral defense</keyword>
<keyword id="KW-0067">ATP-binding</keyword>
<keyword id="KW-0342">GTP-binding</keyword>
<keyword id="KW-0391">Immunity</keyword>
<keyword id="KW-0399">Innate immunity</keyword>
<keyword id="KW-0460">Magnesium</keyword>
<keyword id="KW-0464">Manganese</keyword>
<keyword id="KW-0479">Metal-binding</keyword>
<keyword id="KW-0547">Nucleotide-binding</keyword>
<keyword id="KW-0548">Nucleotidyltransferase</keyword>
<keyword id="KW-1185">Reference proteome</keyword>
<keyword id="KW-0694">RNA-binding</keyword>
<keyword id="KW-0808">Transferase</keyword>
<evidence type="ECO:0000250" key="1">
    <source>
        <dbReference type="UniProtKB" id="A1ZA55"/>
    </source>
</evidence>
<evidence type="ECO:0000250" key="2">
    <source>
        <dbReference type="UniProtKB" id="Q8N884"/>
    </source>
</evidence>
<evidence type="ECO:0000269" key="3">
    <source>
    </source>
</evidence>
<evidence type="ECO:0000303" key="4">
    <source>
    </source>
</evidence>
<evidence type="ECO:0000305" key="5"/>
<evidence type="ECO:0000312" key="6">
    <source>
        <dbReference type="EMBL" id="EFA01049.1"/>
    </source>
</evidence>
<evidence type="ECO:0007744" key="7">
    <source>
        <dbReference type="PDB" id="7LT2"/>
    </source>
</evidence>
<evidence type="ECO:0007829" key="8">
    <source>
        <dbReference type="PDB" id="7LT2"/>
    </source>
</evidence>
<comment type="function">
    <text evidence="1 3">Nucleotidyltransferase that catalyzes the formation of cyclic GMP-AMP (2',3'-cGAMP) from ATP and GTP and plays a key role in innate immunity (PubMed:34261127). Acts as a key sensor of double-stranded RNA (dsRNA), the presence of dsRNA in the cytoplasm being a danger signal that triggers the immune responses (PubMed:34261127). Directly binds dsRNA, activating the nucleotidyltransferase activity, leading to synthesis of 2',3'-cGAMP, a second messenger that binds to and activates Sting, thereby triggering the antiviral immune response via activation of the NF-kappa-B transcription factor Rel (Relish) (By similarity).</text>
</comment>
<comment type="catalytic activity">
    <reaction evidence="3">
        <text>GTP + ATP = 2',3'-cGAMP + 2 diphosphate</text>
        <dbReference type="Rhea" id="RHEA:42064"/>
        <dbReference type="ChEBI" id="CHEBI:30616"/>
        <dbReference type="ChEBI" id="CHEBI:33019"/>
        <dbReference type="ChEBI" id="CHEBI:37565"/>
        <dbReference type="ChEBI" id="CHEBI:143093"/>
        <dbReference type="EC" id="2.7.7.86"/>
    </reaction>
    <physiologicalReaction direction="left-to-right" evidence="3">
        <dbReference type="Rhea" id="RHEA:42065"/>
    </physiologicalReaction>
</comment>
<comment type="catalytic activity">
    <reaction evidence="3">
        <text>GTP + ATP = pppGp(2'-5')A + diphosphate</text>
        <dbReference type="Rhea" id="RHEA:23748"/>
        <dbReference type="ChEBI" id="CHEBI:30616"/>
        <dbReference type="ChEBI" id="CHEBI:33019"/>
        <dbReference type="ChEBI" id="CHEBI:37565"/>
        <dbReference type="ChEBI" id="CHEBI:78318"/>
    </reaction>
    <physiologicalReaction direction="left-to-right" evidence="3">
        <dbReference type="Rhea" id="RHEA:23749"/>
    </physiologicalReaction>
</comment>
<comment type="catalytic activity">
    <reaction evidence="3">
        <text>pppGp(2'-5')A = 2',3'-cGAMP + diphosphate</text>
        <dbReference type="Rhea" id="RHEA:23924"/>
        <dbReference type="ChEBI" id="CHEBI:33019"/>
        <dbReference type="ChEBI" id="CHEBI:78318"/>
        <dbReference type="ChEBI" id="CHEBI:143093"/>
    </reaction>
    <physiologicalReaction direction="left-to-right" evidence="3">
        <dbReference type="Rhea" id="RHEA:23925"/>
    </physiologicalReaction>
</comment>
<comment type="cofactor">
    <cofactor evidence="3">
        <name>Mg(2+)</name>
        <dbReference type="ChEBI" id="CHEBI:18420"/>
    </cofactor>
    <cofactor evidence="3">
        <name>Mn(2+)</name>
        <dbReference type="ChEBI" id="CHEBI:29035"/>
    </cofactor>
</comment>
<comment type="activity regulation">
    <text evidence="3">The enzyme activity is specifically activated by double-stranded RNA (dsRNA).</text>
</comment>
<comment type="similarity">
    <text evidence="5">Belongs to the mab-21 family.</text>
</comment>
<organism>
    <name type="scientific">Tribolium castaneum</name>
    <name type="common">Red flour beetle</name>
    <dbReference type="NCBI Taxonomy" id="7070"/>
    <lineage>
        <taxon>Eukaryota</taxon>
        <taxon>Metazoa</taxon>
        <taxon>Ecdysozoa</taxon>
        <taxon>Arthropoda</taxon>
        <taxon>Hexapoda</taxon>
        <taxon>Insecta</taxon>
        <taxon>Pterygota</taxon>
        <taxon>Neoptera</taxon>
        <taxon>Endopterygota</taxon>
        <taxon>Coleoptera</taxon>
        <taxon>Polyphaga</taxon>
        <taxon>Cucujiformia</taxon>
        <taxon>Tenebrionidae</taxon>
        <taxon>Tenebrionidae incertae sedis</taxon>
        <taxon>Tribolium</taxon>
    </lineage>
</organism>
<protein>
    <recommendedName>
        <fullName evidence="5">Cyclic GMP-AMP synthase-like receptor</fullName>
        <shortName evidence="4">Tc-cGLR</shortName>
        <shortName evidence="4">cGLR</shortName>
        <ecNumber evidence="3">2.7.7.86</ecNumber>
    </recommendedName>
</protein>
<name>CGLR_TRICA</name>
<proteinExistence type="evidence at protein level"/>
<dbReference type="EC" id="2.7.7.86" evidence="3"/>
<dbReference type="EMBL" id="KQ971334">
    <property type="protein sequence ID" value="EFA01049.1"/>
    <property type="molecule type" value="Genomic_DNA"/>
</dbReference>
<dbReference type="PDB" id="7LT2">
    <property type="method" value="X-ray"/>
    <property type="resolution" value="1.58 A"/>
    <property type="chains" value="A=1-398"/>
</dbReference>
<dbReference type="PDBsum" id="7LT2"/>
<dbReference type="SMR" id="D6WI29"/>
<dbReference type="FunCoup" id="D6WI29">
    <property type="interactions" value="12"/>
</dbReference>
<dbReference type="EnsemblMetazoa" id="TC003965_001">
    <property type="protein sequence ID" value="TC003965_001"/>
    <property type="gene ID" value="TC003965"/>
</dbReference>
<dbReference type="KEGG" id="tca:657875"/>
<dbReference type="eggNOG" id="ENOG502S61H">
    <property type="taxonomic scope" value="Eukaryota"/>
</dbReference>
<dbReference type="HOGENOM" id="CLU_053219_0_0_1"/>
<dbReference type="InParanoid" id="D6WI29"/>
<dbReference type="OMA" id="PELNMLD"/>
<dbReference type="OrthoDB" id="6054650at2759"/>
<dbReference type="PhylomeDB" id="D6WI29"/>
<dbReference type="Proteomes" id="UP000007266">
    <property type="component" value="Linkage group 3"/>
</dbReference>
<dbReference type="GO" id="GO:0140700">
    <property type="term" value="F:3',2'-cyclic GMP-AMP synthase activity"/>
    <property type="evidence" value="ECO:0000250"/>
    <property type="project" value="UniProtKB"/>
</dbReference>
<dbReference type="GO" id="GO:0005524">
    <property type="term" value="F:ATP binding"/>
    <property type="evidence" value="ECO:0007669"/>
    <property type="project" value="UniProtKB-KW"/>
</dbReference>
<dbReference type="GO" id="GO:0003725">
    <property type="term" value="F:double-stranded RNA binding"/>
    <property type="evidence" value="ECO:0000314"/>
    <property type="project" value="UniProtKB"/>
</dbReference>
<dbReference type="GO" id="GO:0005525">
    <property type="term" value="F:GTP binding"/>
    <property type="evidence" value="ECO:0007669"/>
    <property type="project" value="UniProtKB-KW"/>
</dbReference>
<dbReference type="GO" id="GO:0046872">
    <property type="term" value="F:metal ion binding"/>
    <property type="evidence" value="ECO:0007669"/>
    <property type="project" value="UniProtKB-KW"/>
</dbReference>
<dbReference type="GO" id="GO:0051607">
    <property type="term" value="P:defense response to virus"/>
    <property type="evidence" value="ECO:0000250"/>
    <property type="project" value="UniProtKB"/>
</dbReference>
<dbReference type="GO" id="GO:1902615">
    <property type="term" value="P:immune response involved in response to exogenous dsRNA"/>
    <property type="evidence" value="ECO:0000314"/>
    <property type="project" value="UniProtKB"/>
</dbReference>
<dbReference type="GO" id="GO:0045087">
    <property type="term" value="P:innate immune response"/>
    <property type="evidence" value="ECO:0007669"/>
    <property type="project" value="UniProtKB-KW"/>
</dbReference>
<dbReference type="Gene3D" id="1.10.1410.40">
    <property type="match status" value="1"/>
</dbReference>
<dbReference type="Gene3D" id="3.30.460.90">
    <property type="match status" value="1"/>
</dbReference>
<dbReference type="InterPro" id="IPR046903">
    <property type="entry name" value="Mab-21-like_nuc_Trfase"/>
</dbReference>
<dbReference type="InterPro" id="IPR046906">
    <property type="entry name" value="Mab-21_HhH/H2TH-like"/>
</dbReference>
<dbReference type="InterPro" id="IPR024810">
    <property type="entry name" value="MAB21L/cGLR"/>
</dbReference>
<dbReference type="PANTHER" id="PTHR10656">
    <property type="entry name" value="CELL FATE DETERMINING PROTEIN MAB21-RELATED"/>
    <property type="match status" value="1"/>
</dbReference>
<dbReference type="PANTHER" id="PTHR10656:SF42">
    <property type="entry name" value="CYCLIC GMP-AMP SYNTHASE-LIKE PROTEIN-RELATED"/>
    <property type="match status" value="1"/>
</dbReference>
<dbReference type="Pfam" id="PF03281">
    <property type="entry name" value="Mab-21"/>
    <property type="match status" value="1"/>
</dbReference>
<dbReference type="Pfam" id="PF20266">
    <property type="entry name" value="Mab-21_C"/>
    <property type="match status" value="1"/>
</dbReference>
<dbReference type="SMART" id="SM01265">
    <property type="entry name" value="Mab-21"/>
    <property type="match status" value="1"/>
</dbReference>
<feature type="chain" id="PRO_0000454448" description="Cyclic GMP-AMP synthase-like receptor">
    <location>
        <begin position="1"/>
        <end position="398"/>
    </location>
</feature>
<feature type="binding site" evidence="2">
    <location>
        <position position="57"/>
    </location>
    <ligand>
        <name>ATP</name>
        <dbReference type="ChEBI" id="CHEBI:30616"/>
    </ligand>
</feature>
<feature type="binding site" evidence="2">
    <location>
        <begin position="69"/>
        <end position="71"/>
    </location>
    <ligand>
        <name>ATP</name>
        <dbReference type="ChEBI" id="CHEBI:30616"/>
    </ligand>
</feature>
<feature type="binding site" evidence="2">
    <location>
        <position position="69"/>
    </location>
    <ligand>
        <name>Mg(2+)</name>
        <dbReference type="ChEBI" id="CHEBI:18420"/>
        <note>catalytic</note>
    </ligand>
</feature>
<feature type="binding site" evidence="2">
    <location>
        <position position="71"/>
    </location>
    <ligand>
        <name>Mg(2+)</name>
        <dbReference type="ChEBI" id="CHEBI:18420"/>
        <note>catalytic</note>
    </ligand>
</feature>
<feature type="binding site" evidence="2">
    <location>
        <position position="192"/>
    </location>
    <ligand>
        <name>GTP</name>
        <dbReference type="ChEBI" id="CHEBI:37565"/>
    </ligand>
</feature>
<feature type="binding site" evidence="2">
    <location>
        <position position="192"/>
    </location>
    <ligand>
        <name>Mg(2+)</name>
        <dbReference type="ChEBI" id="CHEBI:18420"/>
        <note>catalytic</note>
    </ligand>
</feature>
<feature type="binding site" evidence="2">
    <location>
        <begin position="240"/>
        <end position="247"/>
    </location>
    <ligand>
        <name>GTP</name>
        <dbReference type="ChEBI" id="CHEBI:37565"/>
    </ligand>
</feature>
<feature type="binding site" evidence="2">
    <location>
        <begin position="244"/>
        <end position="247"/>
    </location>
    <ligand>
        <name>ATP</name>
        <dbReference type="ChEBI" id="CHEBI:30616"/>
    </ligand>
</feature>
<feature type="binding site" evidence="2">
    <location>
        <position position="265"/>
    </location>
    <ligand>
        <name>ATP</name>
        <dbReference type="ChEBI" id="CHEBI:30616"/>
    </ligand>
</feature>
<feature type="binding site" evidence="2">
    <location>
        <begin position="277"/>
        <end position="281"/>
    </location>
    <ligand>
        <name>ATP</name>
        <dbReference type="ChEBI" id="CHEBI:30616"/>
    </ligand>
</feature>
<feature type="binding site" evidence="3 7">
    <location>
        <position position="288"/>
    </location>
    <ligand>
        <name>Mn(2+)</name>
        <dbReference type="ChEBI" id="CHEBI:29035"/>
    </ligand>
</feature>
<feature type="binding site" evidence="3 7">
    <location>
        <position position="289"/>
    </location>
    <ligand>
        <name>Mn(2+)</name>
        <dbReference type="ChEBI" id="CHEBI:29035"/>
    </ligand>
</feature>
<feature type="binding site" evidence="3 7">
    <location>
        <position position="292"/>
    </location>
    <ligand>
        <name>Mn(2+)</name>
        <dbReference type="ChEBI" id="CHEBI:29035"/>
    </ligand>
</feature>
<feature type="helix" evidence="8">
    <location>
        <begin position="4"/>
        <end position="12"/>
    </location>
</feature>
<feature type="helix" evidence="8">
    <location>
        <begin position="17"/>
        <end position="41"/>
    </location>
</feature>
<feature type="helix" evidence="8">
    <location>
        <begin position="43"/>
        <end position="48"/>
    </location>
</feature>
<feature type="strand" evidence="8">
    <location>
        <begin position="49"/>
        <end position="56"/>
    </location>
</feature>
<feature type="turn" evidence="8">
    <location>
        <begin position="57"/>
        <end position="61"/>
    </location>
</feature>
<feature type="strand" evidence="8">
    <location>
        <begin position="69"/>
        <end position="76"/>
    </location>
</feature>
<feature type="helix" evidence="8">
    <location>
        <begin position="80"/>
        <end position="82"/>
    </location>
</feature>
<feature type="strand" evidence="8">
    <location>
        <begin position="84"/>
        <end position="88"/>
    </location>
</feature>
<feature type="strand" evidence="8">
    <location>
        <begin position="94"/>
        <end position="100"/>
    </location>
</feature>
<feature type="helix" evidence="8">
    <location>
        <begin position="102"/>
        <end position="106"/>
    </location>
</feature>
<feature type="helix" evidence="8">
    <location>
        <begin position="109"/>
        <end position="114"/>
    </location>
</feature>
<feature type="helix" evidence="8">
    <location>
        <begin position="117"/>
        <end position="121"/>
    </location>
</feature>
<feature type="helix" evidence="8">
    <location>
        <begin position="124"/>
        <end position="126"/>
    </location>
</feature>
<feature type="helix" evidence="8">
    <location>
        <begin position="130"/>
        <end position="146"/>
    </location>
</feature>
<feature type="turn" evidence="8">
    <location>
        <begin position="152"/>
        <end position="154"/>
    </location>
</feature>
<feature type="strand" evidence="8">
    <location>
        <begin position="155"/>
        <end position="160"/>
    </location>
</feature>
<feature type="strand" evidence="8">
    <location>
        <begin position="163"/>
        <end position="170"/>
    </location>
</feature>
<feature type="strand" evidence="8">
    <location>
        <begin position="172"/>
        <end position="182"/>
    </location>
</feature>
<feature type="strand" evidence="8">
    <location>
        <begin position="187"/>
        <end position="199"/>
    </location>
</feature>
<feature type="helix" evidence="8">
    <location>
        <begin position="201"/>
        <end position="203"/>
    </location>
</feature>
<feature type="turn" evidence="8">
    <location>
        <begin position="215"/>
        <end position="217"/>
    </location>
</feature>
<feature type="strand" evidence="8">
    <location>
        <begin position="221"/>
        <end position="224"/>
    </location>
</feature>
<feature type="strand" evidence="8">
    <location>
        <begin position="239"/>
        <end position="242"/>
    </location>
</feature>
<feature type="helix" evidence="8">
    <location>
        <begin position="244"/>
        <end position="250"/>
    </location>
</feature>
<feature type="helix" evidence="8">
    <location>
        <begin position="257"/>
        <end position="271"/>
    </location>
</feature>
<feature type="helix" evidence="8">
    <location>
        <begin position="277"/>
        <end position="290"/>
    </location>
</feature>
<feature type="helix" evidence="8">
    <location>
        <begin position="293"/>
        <end position="297"/>
    </location>
</feature>
<feature type="helix" evidence="8">
    <location>
        <begin position="300"/>
        <end position="317"/>
    </location>
</feature>
<feature type="turn" evidence="8">
    <location>
        <begin position="330"/>
        <end position="333"/>
    </location>
</feature>
<feature type="helix" evidence="8">
    <location>
        <begin position="336"/>
        <end position="353"/>
    </location>
</feature>
<feature type="helix" evidence="8">
    <location>
        <begin position="357"/>
        <end position="359"/>
    </location>
</feature>
<feature type="helix" evidence="8">
    <location>
        <begin position="360"/>
        <end position="364"/>
    </location>
</feature>
<feature type="helix" evidence="8">
    <location>
        <begin position="367"/>
        <end position="374"/>
    </location>
</feature>